<name>Y0266_DICDI</name>
<reference key="1">
    <citation type="journal article" date="2005" name="Nature">
        <title>The genome of the social amoeba Dictyostelium discoideum.</title>
        <authorList>
            <person name="Eichinger L."/>
            <person name="Pachebat J.A."/>
            <person name="Gloeckner G."/>
            <person name="Rajandream M.A."/>
            <person name="Sucgang R."/>
            <person name="Berriman M."/>
            <person name="Song J."/>
            <person name="Olsen R."/>
            <person name="Szafranski K."/>
            <person name="Xu Q."/>
            <person name="Tunggal B."/>
            <person name="Kummerfeld S."/>
            <person name="Madera M."/>
            <person name="Konfortov B.A."/>
            <person name="Rivero F."/>
            <person name="Bankier A.T."/>
            <person name="Lehmann R."/>
            <person name="Hamlin N."/>
            <person name="Davies R."/>
            <person name="Gaudet P."/>
            <person name="Fey P."/>
            <person name="Pilcher K."/>
            <person name="Chen G."/>
            <person name="Saunders D."/>
            <person name="Sodergren E.J."/>
            <person name="Davis P."/>
            <person name="Kerhornou A."/>
            <person name="Nie X."/>
            <person name="Hall N."/>
            <person name="Anjard C."/>
            <person name="Hemphill L."/>
            <person name="Bason N."/>
            <person name="Farbrother P."/>
            <person name="Desany B."/>
            <person name="Just E."/>
            <person name="Morio T."/>
            <person name="Rost R."/>
            <person name="Churcher C.M."/>
            <person name="Cooper J."/>
            <person name="Haydock S."/>
            <person name="van Driessche N."/>
            <person name="Cronin A."/>
            <person name="Goodhead I."/>
            <person name="Muzny D.M."/>
            <person name="Mourier T."/>
            <person name="Pain A."/>
            <person name="Lu M."/>
            <person name="Harper D."/>
            <person name="Lindsay R."/>
            <person name="Hauser H."/>
            <person name="James K.D."/>
            <person name="Quiles M."/>
            <person name="Madan Babu M."/>
            <person name="Saito T."/>
            <person name="Buchrieser C."/>
            <person name="Wardroper A."/>
            <person name="Felder M."/>
            <person name="Thangavelu M."/>
            <person name="Johnson D."/>
            <person name="Knights A."/>
            <person name="Loulseged H."/>
            <person name="Mungall K.L."/>
            <person name="Oliver K."/>
            <person name="Price C."/>
            <person name="Quail M.A."/>
            <person name="Urushihara H."/>
            <person name="Hernandez J."/>
            <person name="Rabbinowitsch E."/>
            <person name="Steffen D."/>
            <person name="Sanders M."/>
            <person name="Ma J."/>
            <person name="Kohara Y."/>
            <person name="Sharp S."/>
            <person name="Simmonds M.N."/>
            <person name="Spiegler S."/>
            <person name="Tivey A."/>
            <person name="Sugano S."/>
            <person name="White B."/>
            <person name="Walker D."/>
            <person name="Woodward J.R."/>
            <person name="Winckler T."/>
            <person name="Tanaka Y."/>
            <person name="Shaulsky G."/>
            <person name="Schleicher M."/>
            <person name="Weinstock G.M."/>
            <person name="Rosenthal A."/>
            <person name="Cox E.C."/>
            <person name="Chisholm R.L."/>
            <person name="Gibbs R.A."/>
            <person name="Loomis W.F."/>
            <person name="Platzer M."/>
            <person name="Kay R.R."/>
            <person name="Williams J.G."/>
            <person name="Dear P.H."/>
            <person name="Noegel A.A."/>
            <person name="Barrell B.G."/>
            <person name="Kuspa A."/>
        </authorList>
    </citation>
    <scope>NUCLEOTIDE SEQUENCE [LARGE SCALE GENOMIC DNA]</scope>
    <source>
        <strain>AX4</strain>
    </source>
</reference>
<organism>
    <name type="scientific">Dictyostelium discoideum</name>
    <name type="common">Social amoeba</name>
    <dbReference type="NCBI Taxonomy" id="44689"/>
    <lineage>
        <taxon>Eukaryota</taxon>
        <taxon>Amoebozoa</taxon>
        <taxon>Evosea</taxon>
        <taxon>Eumycetozoa</taxon>
        <taxon>Dictyostelia</taxon>
        <taxon>Dictyosteliales</taxon>
        <taxon>Dictyosteliaceae</taxon>
        <taxon>Dictyostelium</taxon>
    </lineage>
</organism>
<proteinExistence type="evidence at transcript level"/>
<evidence type="ECO:0000255" key="1"/>
<evidence type="ECO:0000256" key="2">
    <source>
        <dbReference type="SAM" id="MobiDB-lite"/>
    </source>
</evidence>
<gene>
    <name type="ORF">DDB_G0290685</name>
</gene>
<accession>Q54G14</accession>
<accession>Q54G15</accession>
<comment type="domain">
    <text>Contains about 100 repeats of the sequence DGENNQ or DGGENNQ.</text>
</comment>
<feature type="chain" id="PRO_0000343636" description="Uncharacterized protein DDB_G0290685">
    <location>
        <begin position="1"/>
        <end position="1081"/>
    </location>
</feature>
<feature type="region of interest" description="Disordered" evidence="2">
    <location>
        <begin position="22"/>
        <end position="60"/>
    </location>
</feature>
<feature type="region of interest" description="Disordered" evidence="2">
    <location>
        <begin position="250"/>
        <end position="321"/>
    </location>
</feature>
<feature type="region of interest" description="Disordered" evidence="2">
    <location>
        <begin position="388"/>
        <end position="1081"/>
    </location>
</feature>
<feature type="coiled-coil region" evidence="1">
    <location>
        <begin position="18"/>
        <end position="131"/>
    </location>
</feature>
<feature type="coiled-coil region" evidence="1">
    <location>
        <begin position="173"/>
        <end position="242"/>
    </location>
</feature>
<feature type="compositionally biased region" description="Basic and acidic residues" evidence="2">
    <location>
        <begin position="22"/>
        <end position="53"/>
    </location>
</feature>
<feature type="compositionally biased region" description="Pro residues" evidence="2">
    <location>
        <begin position="267"/>
        <end position="283"/>
    </location>
</feature>
<feature type="compositionally biased region" description="Low complexity" evidence="2">
    <location>
        <begin position="284"/>
        <end position="313"/>
    </location>
</feature>
<feature type="compositionally biased region" description="Low complexity" evidence="2">
    <location>
        <begin position="396"/>
        <end position="410"/>
    </location>
</feature>
<feature type="compositionally biased region" description="Basic and acidic residues" evidence="2">
    <location>
        <begin position="411"/>
        <end position="421"/>
    </location>
</feature>
<feature type="compositionally biased region" description="Low complexity" evidence="2">
    <location>
        <begin position="422"/>
        <end position="568"/>
    </location>
</feature>
<feature type="compositionally biased region" description="Low complexity" evidence="2">
    <location>
        <begin position="576"/>
        <end position="602"/>
    </location>
</feature>
<feature type="compositionally biased region" description="Low complexity" evidence="2">
    <location>
        <begin position="614"/>
        <end position="623"/>
    </location>
</feature>
<feature type="compositionally biased region" description="Low complexity" evidence="2">
    <location>
        <begin position="633"/>
        <end position="644"/>
    </location>
</feature>
<feature type="compositionally biased region" description="Low complexity" evidence="2">
    <location>
        <begin position="662"/>
        <end position="672"/>
    </location>
</feature>
<feature type="compositionally biased region" description="Low complexity" evidence="2">
    <location>
        <begin position="680"/>
        <end position="733"/>
    </location>
</feature>
<feature type="compositionally biased region" description="Acidic residues" evidence="2">
    <location>
        <begin position="748"/>
        <end position="768"/>
    </location>
</feature>
<feature type="compositionally biased region" description="Acidic residues" evidence="2">
    <location>
        <begin position="778"/>
        <end position="832"/>
    </location>
</feature>
<feature type="compositionally biased region" description="Acidic residues" evidence="2">
    <location>
        <begin position="840"/>
        <end position="854"/>
    </location>
</feature>
<feature type="compositionally biased region" description="Low complexity" evidence="2">
    <location>
        <begin position="855"/>
        <end position="869"/>
    </location>
</feature>
<feature type="compositionally biased region" description="Low complexity" evidence="2">
    <location>
        <begin position="877"/>
        <end position="888"/>
    </location>
</feature>
<feature type="compositionally biased region" description="Acidic residues" evidence="2">
    <location>
        <begin position="889"/>
        <end position="954"/>
    </location>
</feature>
<feature type="compositionally biased region" description="Low complexity" evidence="2">
    <location>
        <begin position="955"/>
        <end position="975"/>
    </location>
</feature>
<feature type="compositionally biased region" description="Low complexity" evidence="2">
    <location>
        <begin position="983"/>
        <end position="1026"/>
    </location>
</feature>
<feature type="compositionally biased region" description="Low complexity" evidence="2">
    <location>
        <begin position="1034"/>
        <end position="1081"/>
    </location>
</feature>
<sequence>MTIFDAVAKAIVPSVTHAIEENNKNREIQEKRQKETKDRNDRMVQNQKDRKEMIGLTNEKQTYSNSVKNAKTDNEKKIFQNLLDKTNSRITDIEKRQSGDISEYKRLVEENKNLEKNVKEFKEVMKPFEENDIIHNPKHVDEDTIEENKKKMEDIKEVLGFTKTAANGGLPPNHDEDNKKIAELKKKYDDVKNHGHSNSGGLVGSVFNAIVPSVKENLRNAELENIQKEIKQTEDKISNDDKFYNTYKLTDDERKQFGSNPGDPQATPTPTPTPTPTPTPTPTPTTTTTTTTTPKPTTTTTTTSTTTPTKTSTNTNDKPGIFETVGGGSGKVADALNPIRIVTGGAIFSDTMEKIGGGSGKLADEGVEAVGSGISNFAQSVGIIPKKQEPKKDENNNQSNNNNNNNQAGDDQNKNQNRDENNQGGENNQGGENNQDGENNQNGDENNQGGENNQGDENNQGGENNQGDQNNQDGGENNQDGGENNQDGHGNNQDGENNQDGGENNQDSGENNQDGGENNQDGGENNQDGGENNQDGGENNQDGGENNQDGGENNQDGENNQDGENNQENNRDGENNQDGGENNQDGGENNQDGENNQDGGENNQDDGENKQDGGENNQDGGENNQDDGENNQDGENNQDGGENNQDGDENNQDSGENNQDSGENNQDGGENNQDGDENNQDGGENNQDGENNQNGENNQDGGENNQDGENNQDGENNQDGGENNQDGGENNQDGGEDNQDGGENNQEGGEDNQDGGEDNQDGGEDNQDGGENNQGDENNQDVDENNQDGENNQDGDENNQDGENNQDGENNQDGDENNNQDGEQNQDGDENNQDGGENNQDGDENNNQDGDENNNQDGGENNQDGGENNQDGDENNNQDGGENNQDGENNQDGDENNNQDGEQNQDGDENNQEGDENNNQGDDENNNQDGDENNNQDGDENNQDGDENNQDGDENNQGNDENNQDGDQNNQGGDENNQDGDGENNQGDENNQDGGENNQDGGENNQDQDGSENNQGNNENNQGGDENNQDQDGGENNQGNDENNQGGDENNQGNENDQGGDENNQGGDENTNQEENGGNDE</sequence>
<keyword id="KW-0175">Coiled coil</keyword>
<keyword id="KW-1185">Reference proteome</keyword>
<keyword id="KW-0677">Repeat</keyword>
<protein>
    <recommendedName>
        <fullName>Uncharacterized protein DDB_G0290685</fullName>
    </recommendedName>
</protein>
<dbReference type="EMBL" id="AAFI02000163">
    <property type="status" value="NOT_ANNOTATED_CDS"/>
    <property type="molecule type" value="Genomic_DNA"/>
</dbReference>
<dbReference type="EMBL" id="AAFI02000164">
    <property type="status" value="NOT_ANNOTATED_CDS"/>
    <property type="molecule type" value="Genomic_DNA"/>
</dbReference>
<dbReference type="STRING" id="44689.Q54G14"/>
<dbReference type="GlyGen" id="Q54G14">
    <property type="glycosylation" value="8 sites"/>
</dbReference>
<dbReference type="dictyBase" id="DDB_G0290685"/>
<dbReference type="InParanoid" id="Q54G14"/>
<dbReference type="OMA" id="DGENNQD"/>
<dbReference type="PRO" id="PR:Q54G14"/>
<dbReference type="Proteomes" id="UP000002195">
    <property type="component" value="Chromosome 5"/>
</dbReference>
<dbReference type="GO" id="GO:0099139">
    <property type="term" value="P:cheating during chimeric sorocarp development"/>
    <property type="evidence" value="ECO:0000315"/>
    <property type="project" value="dictyBase"/>
</dbReference>
<dbReference type="InterPro" id="IPR009816">
    <property type="entry name" value="SPATS2-like"/>
</dbReference>
<dbReference type="PANTHER" id="PTHR15623:SF11">
    <property type="entry name" value="SPERMATOGENESIS-ASSOCIATED SERINE-RICH PROTEIN 2"/>
    <property type="match status" value="1"/>
</dbReference>
<dbReference type="PANTHER" id="PTHR15623">
    <property type="entry name" value="SPERMATOGENESIS-ASSOCIATED SERINE-RICH PROTEIN 2-RELATED"/>
    <property type="match status" value="1"/>
</dbReference>